<name>UVRC_ACTPJ</name>
<feature type="chain" id="PRO_1000099455" description="UvrABC system protein C">
    <location>
        <begin position="1"/>
        <end position="610"/>
    </location>
</feature>
<feature type="domain" description="GIY-YIG" evidence="1">
    <location>
        <begin position="13"/>
        <end position="91"/>
    </location>
</feature>
<feature type="domain" description="UVR" evidence="1">
    <location>
        <begin position="201"/>
        <end position="236"/>
    </location>
</feature>
<proteinExistence type="inferred from homology"/>
<organism>
    <name type="scientific">Actinobacillus pleuropneumoniae serotype 3 (strain JL03)</name>
    <dbReference type="NCBI Taxonomy" id="434271"/>
    <lineage>
        <taxon>Bacteria</taxon>
        <taxon>Pseudomonadati</taxon>
        <taxon>Pseudomonadota</taxon>
        <taxon>Gammaproteobacteria</taxon>
        <taxon>Pasteurellales</taxon>
        <taxon>Pasteurellaceae</taxon>
        <taxon>Actinobacillus</taxon>
    </lineage>
</organism>
<keyword id="KW-0963">Cytoplasm</keyword>
<keyword id="KW-0227">DNA damage</keyword>
<keyword id="KW-0228">DNA excision</keyword>
<keyword id="KW-0234">DNA repair</keyword>
<keyword id="KW-0267">Excision nuclease</keyword>
<keyword id="KW-0742">SOS response</keyword>
<accession>B0BT25</accession>
<evidence type="ECO:0000255" key="1">
    <source>
        <dbReference type="HAMAP-Rule" id="MF_00203"/>
    </source>
</evidence>
<protein>
    <recommendedName>
        <fullName evidence="1">UvrABC system protein C</fullName>
        <shortName evidence="1">Protein UvrC</shortName>
    </recommendedName>
    <alternativeName>
        <fullName evidence="1">Excinuclease ABC subunit C</fullName>
    </alternativeName>
</protein>
<dbReference type="EMBL" id="CP000687">
    <property type="protein sequence ID" value="ABY68882.1"/>
    <property type="molecule type" value="Genomic_DNA"/>
</dbReference>
<dbReference type="RefSeq" id="WP_012262755.1">
    <property type="nucleotide sequence ID" value="NC_010278.1"/>
</dbReference>
<dbReference type="SMR" id="B0BT25"/>
<dbReference type="KEGG" id="apj:APJL_0287"/>
<dbReference type="HOGENOM" id="CLU_014841_3_2_6"/>
<dbReference type="Proteomes" id="UP000008547">
    <property type="component" value="Chromosome"/>
</dbReference>
<dbReference type="GO" id="GO:0005737">
    <property type="term" value="C:cytoplasm"/>
    <property type="evidence" value="ECO:0007669"/>
    <property type="project" value="UniProtKB-SubCell"/>
</dbReference>
<dbReference type="GO" id="GO:0009380">
    <property type="term" value="C:excinuclease repair complex"/>
    <property type="evidence" value="ECO:0007669"/>
    <property type="project" value="InterPro"/>
</dbReference>
<dbReference type="GO" id="GO:0003677">
    <property type="term" value="F:DNA binding"/>
    <property type="evidence" value="ECO:0007669"/>
    <property type="project" value="UniProtKB-UniRule"/>
</dbReference>
<dbReference type="GO" id="GO:0009381">
    <property type="term" value="F:excinuclease ABC activity"/>
    <property type="evidence" value="ECO:0007669"/>
    <property type="project" value="UniProtKB-UniRule"/>
</dbReference>
<dbReference type="GO" id="GO:0006289">
    <property type="term" value="P:nucleotide-excision repair"/>
    <property type="evidence" value="ECO:0007669"/>
    <property type="project" value="UniProtKB-UniRule"/>
</dbReference>
<dbReference type="GO" id="GO:0009432">
    <property type="term" value="P:SOS response"/>
    <property type="evidence" value="ECO:0007669"/>
    <property type="project" value="UniProtKB-UniRule"/>
</dbReference>
<dbReference type="CDD" id="cd10434">
    <property type="entry name" value="GIY-YIG_UvrC_Cho"/>
    <property type="match status" value="1"/>
</dbReference>
<dbReference type="FunFam" id="1.10.150.20:FF:000005">
    <property type="entry name" value="UvrABC system protein C"/>
    <property type="match status" value="1"/>
</dbReference>
<dbReference type="FunFam" id="3.30.420.340:FF:000001">
    <property type="entry name" value="UvrABC system protein C"/>
    <property type="match status" value="1"/>
</dbReference>
<dbReference type="FunFam" id="3.40.1440.10:FF:000001">
    <property type="entry name" value="UvrABC system protein C"/>
    <property type="match status" value="1"/>
</dbReference>
<dbReference type="FunFam" id="4.10.860.10:FF:000002">
    <property type="entry name" value="UvrABC system protein C"/>
    <property type="match status" value="1"/>
</dbReference>
<dbReference type="Gene3D" id="1.10.150.20">
    <property type="entry name" value="5' to 3' exonuclease, C-terminal subdomain"/>
    <property type="match status" value="1"/>
</dbReference>
<dbReference type="Gene3D" id="3.40.1440.10">
    <property type="entry name" value="GIY-YIG endonuclease"/>
    <property type="match status" value="1"/>
</dbReference>
<dbReference type="Gene3D" id="4.10.860.10">
    <property type="entry name" value="UVR domain"/>
    <property type="match status" value="1"/>
</dbReference>
<dbReference type="Gene3D" id="3.30.420.340">
    <property type="entry name" value="UvrC, RNAse H endonuclease domain"/>
    <property type="match status" value="1"/>
</dbReference>
<dbReference type="HAMAP" id="MF_00203">
    <property type="entry name" value="UvrC"/>
    <property type="match status" value="1"/>
</dbReference>
<dbReference type="InterPro" id="IPR000305">
    <property type="entry name" value="GIY-YIG_endonuc"/>
</dbReference>
<dbReference type="InterPro" id="IPR035901">
    <property type="entry name" value="GIY-YIG_endonuc_sf"/>
</dbReference>
<dbReference type="InterPro" id="IPR047296">
    <property type="entry name" value="GIY-YIG_UvrC_Cho"/>
</dbReference>
<dbReference type="InterPro" id="IPR000445">
    <property type="entry name" value="HhH_motif"/>
</dbReference>
<dbReference type="InterPro" id="IPR003583">
    <property type="entry name" value="Hlx-hairpin-Hlx_DNA-bd_motif"/>
</dbReference>
<dbReference type="InterPro" id="IPR010994">
    <property type="entry name" value="RuvA_2-like"/>
</dbReference>
<dbReference type="InterPro" id="IPR001943">
    <property type="entry name" value="UVR_dom"/>
</dbReference>
<dbReference type="InterPro" id="IPR036876">
    <property type="entry name" value="UVR_dom_sf"/>
</dbReference>
<dbReference type="InterPro" id="IPR050066">
    <property type="entry name" value="UvrABC_protein_C"/>
</dbReference>
<dbReference type="InterPro" id="IPR004791">
    <property type="entry name" value="UvrC"/>
</dbReference>
<dbReference type="InterPro" id="IPR001162">
    <property type="entry name" value="UvrC_RNase_H_dom"/>
</dbReference>
<dbReference type="InterPro" id="IPR038476">
    <property type="entry name" value="UvrC_RNase_H_dom_sf"/>
</dbReference>
<dbReference type="NCBIfam" id="NF001824">
    <property type="entry name" value="PRK00558.1-5"/>
    <property type="match status" value="1"/>
</dbReference>
<dbReference type="NCBIfam" id="TIGR00194">
    <property type="entry name" value="uvrC"/>
    <property type="match status" value="1"/>
</dbReference>
<dbReference type="PANTHER" id="PTHR30562:SF1">
    <property type="entry name" value="UVRABC SYSTEM PROTEIN C"/>
    <property type="match status" value="1"/>
</dbReference>
<dbReference type="PANTHER" id="PTHR30562">
    <property type="entry name" value="UVRC/OXIDOREDUCTASE"/>
    <property type="match status" value="1"/>
</dbReference>
<dbReference type="Pfam" id="PF01541">
    <property type="entry name" value="GIY-YIG"/>
    <property type="match status" value="1"/>
</dbReference>
<dbReference type="Pfam" id="PF00633">
    <property type="entry name" value="HHH"/>
    <property type="match status" value="1"/>
</dbReference>
<dbReference type="Pfam" id="PF02151">
    <property type="entry name" value="UVR"/>
    <property type="match status" value="1"/>
</dbReference>
<dbReference type="Pfam" id="PF22920">
    <property type="entry name" value="UvrC_RNaseH"/>
    <property type="match status" value="1"/>
</dbReference>
<dbReference type="Pfam" id="PF08459">
    <property type="entry name" value="UvrC_RNaseH_dom"/>
    <property type="match status" value="1"/>
</dbReference>
<dbReference type="SMART" id="SM00465">
    <property type="entry name" value="GIYc"/>
    <property type="match status" value="1"/>
</dbReference>
<dbReference type="SMART" id="SM00278">
    <property type="entry name" value="HhH1"/>
    <property type="match status" value="2"/>
</dbReference>
<dbReference type="SUPFAM" id="SSF46600">
    <property type="entry name" value="C-terminal UvrC-binding domain of UvrB"/>
    <property type="match status" value="1"/>
</dbReference>
<dbReference type="SUPFAM" id="SSF82771">
    <property type="entry name" value="GIY-YIG endonuclease"/>
    <property type="match status" value="1"/>
</dbReference>
<dbReference type="SUPFAM" id="SSF47781">
    <property type="entry name" value="RuvA domain 2-like"/>
    <property type="match status" value="1"/>
</dbReference>
<dbReference type="PROSITE" id="PS50164">
    <property type="entry name" value="GIY_YIG"/>
    <property type="match status" value="1"/>
</dbReference>
<dbReference type="PROSITE" id="PS50151">
    <property type="entry name" value="UVR"/>
    <property type="match status" value="1"/>
</dbReference>
<dbReference type="PROSITE" id="PS50165">
    <property type="entry name" value="UVRC"/>
    <property type="match status" value="1"/>
</dbReference>
<sequence>MFDAKAFLADVPHLPGVYRMYDAKNTIIYVGKAKDLKKRLSSYFRSQLASKKTEALVANIHHIETTITHSETEALLLEHNYIKENQPKYNVLLRDDKSYPYILLTKHQHPRITSFRGSKKVAGEYFGPYPNAGAVRETLNLLQKLFPIRQCEDSYYKNRSRPCLQYQIGRCLAPCVESYYSQAEYDNQVNLVRLFLQGKDGQVIEHLVQKMENAAQELDFEAAARFRDQIQSVRAVQEKQFVSNERLDDLDIISIAYQHGIACVHILFVRHGKVLGNRSYFPKVPNNTDLSELADTFVGQFYLQMNQHRTIPNQIIIDQPLSESAALADVLSEQAGHKVSIADKNIRGDKSRYLALAKTNAEAALTLQLKQDTHIRQRYDSLKTLLNLAEIKRMECFDISHTMGNQTVASCVVFDENGPLKSDYRRFNIEGITGGDDYAAMEQALLKRYSRHLEEEKIPDIIFIDGGKGQLNRALETFASLNVSWDKRKPLLIGVAKGVERKAGLETLLISKWDKEIHLPPDSPALHLIQHIRDESHNHAITGHRKKRQKAFTESGLESIAGVGAKRRQALLKYLGGMQGVKAATLEEIQSVPGISKQLAEVIFDTLQHS</sequence>
<reference key="1">
    <citation type="journal article" date="2008" name="PLoS ONE">
        <title>Genome biology of Actinobacillus pleuropneumoniae JL03, an isolate of serotype 3 prevalent in China.</title>
        <authorList>
            <person name="Xu Z."/>
            <person name="Zhou Y."/>
            <person name="Li L."/>
            <person name="Zhou R."/>
            <person name="Xiao S."/>
            <person name="Wan Y."/>
            <person name="Zhang S."/>
            <person name="Wang K."/>
            <person name="Li W."/>
            <person name="Li L."/>
            <person name="Jin H."/>
            <person name="Kang M."/>
            <person name="Dalai B."/>
            <person name="Li T."/>
            <person name="Liu L."/>
            <person name="Cheng Y."/>
            <person name="Zhang L."/>
            <person name="Xu T."/>
            <person name="Zheng H."/>
            <person name="Pu S."/>
            <person name="Wang B."/>
            <person name="Gu W."/>
            <person name="Zhang X.L."/>
            <person name="Zhu G.-F."/>
            <person name="Wang S."/>
            <person name="Zhao G.-P."/>
            <person name="Chen H."/>
        </authorList>
    </citation>
    <scope>NUCLEOTIDE SEQUENCE [LARGE SCALE GENOMIC DNA]</scope>
    <source>
        <strain>JL03</strain>
    </source>
</reference>
<gene>
    <name evidence="1" type="primary">uvrC</name>
    <name type="ordered locus">APJL_0287</name>
</gene>
<comment type="function">
    <text evidence="1">The UvrABC repair system catalyzes the recognition and processing of DNA lesions. UvrC both incises the 5' and 3' sides of the lesion. The N-terminal half is responsible for the 3' incision and the C-terminal half is responsible for the 5' incision.</text>
</comment>
<comment type="subunit">
    <text evidence="1">Interacts with UvrB in an incision complex.</text>
</comment>
<comment type="subcellular location">
    <subcellularLocation>
        <location evidence="1">Cytoplasm</location>
    </subcellularLocation>
</comment>
<comment type="similarity">
    <text evidence="1">Belongs to the UvrC family.</text>
</comment>